<proteinExistence type="inferred from homology"/>
<name>YNEN_BACSU</name>
<feature type="chain" id="PRO_0000386532" description="Thioredoxin-like protein YneN">
    <location>
        <begin position="1"/>
        <end position="170"/>
    </location>
</feature>
<feature type="transmembrane region" description="Helical" evidence="1">
    <location>
        <begin position="5"/>
        <end position="23"/>
    </location>
</feature>
<feature type="domain" description="Thioredoxin" evidence="2">
    <location>
        <begin position="33"/>
        <end position="170"/>
    </location>
</feature>
<feature type="disulfide bond" description="Redox-active" evidence="2">
    <location>
        <begin position="71"/>
        <end position="74"/>
    </location>
</feature>
<keyword id="KW-1003">Cell membrane</keyword>
<keyword id="KW-1015">Disulfide bond</keyword>
<keyword id="KW-0472">Membrane</keyword>
<keyword id="KW-0676">Redox-active center</keyword>
<keyword id="KW-1185">Reference proteome</keyword>
<keyword id="KW-0812">Transmembrane</keyword>
<keyword id="KW-1133">Transmembrane helix</keyword>
<organism>
    <name type="scientific">Bacillus subtilis (strain 168)</name>
    <dbReference type="NCBI Taxonomy" id="224308"/>
    <lineage>
        <taxon>Bacteria</taxon>
        <taxon>Bacillati</taxon>
        <taxon>Bacillota</taxon>
        <taxon>Bacilli</taxon>
        <taxon>Bacillales</taxon>
        <taxon>Bacillaceae</taxon>
        <taxon>Bacillus</taxon>
    </lineage>
</organism>
<accession>O31820</accession>
<comment type="subcellular location">
    <subcellularLocation>
        <location evidence="4">Cell membrane</location>
        <topology evidence="4">Single-pass membrane protein</topology>
    </subcellularLocation>
</comment>
<comment type="disruption phenotype">
    <text evidence="3">No sporulation-related phenotype.</text>
</comment>
<comment type="similarity">
    <text evidence="4">Belongs to the thioredoxin family.</text>
</comment>
<sequence>MLKKWLAGILLIMLVGYTGWNLYQTYSKKEVGIQEGQQAPDFSLKTLSGEKSSLQDAKGKKVLLNFWATWCKPCRQEMPAMEKLQKEYADKLAVVAVNFTSAEKSEKQVRAFADTYDLTFPILIDKKGINADYNVMSYPTTYILDEKGVIQDIHVGTMTKKEMEQKLDLD</sequence>
<evidence type="ECO:0000255" key="1"/>
<evidence type="ECO:0000255" key="2">
    <source>
        <dbReference type="PROSITE-ProRule" id="PRU00691"/>
    </source>
</evidence>
<evidence type="ECO:0000269" key="3">
    <source>
    </source>
</evidence>
<evidence type="ECO:0000305" key="4"/>
<protein>
    <recommendedName>
        <fullName>Thioredoxin-like protein YneN</fullName>
    </recommendedName>
</protein>
<gene>
    <name type="primary">yneN</name>
    <name type="ordered locus">BSU18010</name>
</gene>
<reference key="1">
    <citation type="journal article" date="1997" name="Nature">
        <title>The complete genome sequence of the Gram-positive bacterium Bacillus subtilis.</title>
        <authorList>
            <person name="Kunst F."/>
            <person name="Ogasawara N."/>
            <person name="Moszer I."/>
            <person name="Albertini A.M."/>
            <person name="Alloni G."/>
            <person name="Azevedo V."/>
            <person name="Bertero M.G."/>
            <person name="Bessieres P."/>
            <person name="Bolotin A."/>
            <person name="Borchert S."/>
            <person name="Borriss R."/>
            <person name="Boursier L."/>
            <person name="Brans A."/>
            <person name="Braun M."/>
            <person name="Brignell S.C."/>
            <person name="Bron S."/>
            <person name="Brouillet S."/>
            <person name="Bruschi C.V."/>
            <person name="Caldwell B."/>
            <person name="Capuano V."/>
            <person name="Carter N.M."/>
            <person name="Choi S.-K."/>
            <person name="Codani J.-J."/>
            <person name="Connerton I.F."/>
            <person name="Cummings N.J."/>
            <person name="Daniel R.A."/>
            <person name="Denizot F."/>
            <person name="Devine K.M."/>
            <person name="Duesterhoeft A."/>
            <person name="Ehrlich S.D."/>
            <person name="Emmerson P.T."/>
            <person name="Entian K.-D."/>
            <person name="Errington J."/>
            <person name="Fabret C."/>
            <person name="Ferrari E."/>
            <person name="Foulger D."/>
            <person name="Fritz C."/>
            <person name="Fujita M."/>
            <person name="Fujita Y."/>
            <person name="Fuma S."/>
            <person name="Galizzi A."/>
            <person name="Galleron N."/>
            <person name="Ghim S.-Y."/>
            <person name="Glaser P."/>
            <person name="Goffeau A."/>
            <person name="Golightly E.J."/>
            <person name="Grandi G."/>
            <person name="Guiseppi G."/>
            <person name="Guy B.J."/>
            <person name="Haga K."/>
            <person name="Haiech J."/>
            <person name="Harwood C.R."/>
            <person name="Henaut A."/>
            <person name="Hilbert H."/>
            <person name="Holsappel S."/>
            <person name="Hosono S."/>
            <person name="Hullo M.-F."/>
            <person name="Itaya M."/>
            <person name="Jones L.-M."/>
            <person name="Joris B."/>
            <person name="Karamata D."/>
            <person name="Kasahara Y."/>
            <person name="Klaerr-Blanchard M."/>
            <person name="Klein C."/>
            <person name="Kobayashi Y."/>
            <person name="Koetter P."/>
            <person name="Koningstein G."/>
            <person name="Krogh S."/>
            <person name="Kumano M."/>
            <person name="Kurita K."/>
            <person name="Lapidus A."/>
            <person name="Lardinois S."/>
            <person name="Lauber J."/>
            <person name="Lazarevic V."/>
            <person name="Lee S.-M."/>
            <person name="Levine A."/>
            <person name="Liu H."/>
            <person name="Masuda S."/>
            <person name="Mauel C."/>
            <person name="Medigue C."/>
            <person name="Medina N."/>
            <person name="Mellado R.P."/>
            <person name="Mizuno M."/>
            <person name="Moestl D."/>
            <person name="Nakai S."/>
            <person name="Noback M."/>
            <person name="Noone D."/>
            <person name="O'Reilly M."/>
            <person name="Ogawa K."/>
            <person name="Ogiwara A."/>
            <person name="Oudega B."/>
            <person name="Park S.-H."/>
            <person name="Parro V."/>
            <person name="Pohl T.M."/>
            <person name="Portetelle D."/>
            <person name="Porwollik S."/>
            <person name="Prescott A.M."/>
            <person name="Presecan E."/>
            <person name="Pujic P."/>
            <person name="Purnelle B."/>
            <person name="Rapoport G."/>
            <person name="Rey M."/>
            <person name="Reynolds S."/>
            <person name="Rieger M."/>
            <person name="Rivolta C."/>
            <person name="Rocha E."/>
            <person name="Roche B."/>
            <person name="Rose M."/>
            <person name="Sadaie Y."/>
            <person name="Sato T."/>
            <person name="Scanlan E."/>
            <person name="Schleich S."/>
            <person name="Schroeter R."/>
            <person name="Scoffone F."/>
            <person name="Sekiguchi J."/>
            <person name="Sekowska A."/>
            <person name="Seror S.J."/>
            <person name="Serror P."/>
            <person name="Shin B.-S."/>
            <person name="Soldo B."/>
            <person name="Sorokin A."/>
            <person name="Tacconi E."/>
            <person name="Takagi T."/>
            <person name="Takahashi H."/>
            <person name="Takemaru K."/>
            <person name="Takeuchi M."/>
            <person name="Tamakoshi A."/>
            <person name="Tanaka T."/>
            <person name="Terpstra P."/>
            <person name="Tognoni A."/>
            <person name="Tosato V."/>
            <person name="Uchiyama S."/>
            <person name="Vandenbol M."/>
            <person name="Vannier F."/>
            <person name="Vassarotti A."/>
            <person name="Viari A."/>
            <person name="Wambutt R."/>
            <person name="Wedler E."/>
            <person name="Wedler H."/>
            <person name="Weitzenegger T."/>
            <person name="Winters P."/>
            <person name="Wipat A."/>
            <person name="Yamamoto H."/>
            <person name="Yamane K."/>
            <person name="Yasumoto K."/>
            <person name="Yata K."/>
            <person name="Yoshida K."/>
            <person name="Yoshikawa H.-F."/>
            <person name="Zumstein E."/>
            <person name="Yoshikawa H."/>
            <person name="Danchin A."/>
        </authorList>
    </citation>
    <scope>NUCLEOTIDE SEQUENCE [LARGE SCALE GENOMIC DNA]</scope>
    <source>
        <strain>168</strain>
    </source>
</reference>
<reference key="2">
    <citation type="journal article" date="2004" name="J. Bacteriol.">
        <title>Bacillus subtilis StoA is a thiol-disulfide oxidoreductase important for spore cortex synthesis.</title>
        <authorList>
            <person name="Erlendsson L.S."/>
            <person name="Moeller M."/>
            <person name="Hederstedt L."/>
        </authorList>
    </citation>
    <scope>DISRUPTION PHENOTYPE</scope>
    <source>
        <strain>168 / 1A1</strain>
    </source>
</reference>
<dbReference type="EMBL" id="AL009126">
    <property type="protein sequence ID" value="CAB13685.1"/>
    <property type="molecule type" value="Genomic_DNA"/>
</dbReference>
<dbReference type="PIR" id="E69891">
    <property type="entry name" value="E69891"/>
</dbReference>
<dbReference type="RefSeq" id="NP_389684.1">
    <property type="nucleotide sequence ID" value="NC_000964.3"/>
</dbReference>
<dbReference type="RefSeq" id="WP_003244797.1">
    <property type="nucleotide sequence ID" value="NZ_OZ025638.1"/>
</dbReference>
<dbReference type="SMR" id="O31820"/>
<dbReference type="FunCoup" id="O31820">
    <property type="interactions" value="199"/>
</dbReference>
<dbReference type="STRING" id="224308.BSU18010"/>
<dbReference type="PaxDb" id="224308-BSU18010"/>
<dbReference type="EnsemblBacteria" id="CAB13685">
    <property type="protein sequence ID" value="CAB13685"/>
    <property type="gene ID" value="BSU_18010"/>
</dbReference>
<dbReference type="GeneID" id="938193"/>
<dbReference type="KEGG" id="bsu:BSU18010"/>
<dbReference type="PATRIC" id="fig|224308.179.peg.1962"/>
<dbReference type="eggNOG" id="COG0526">
    <property type="taxonomic scope" value="Bacteria"/>
</dbReference>
<dbReference type="InParanoid" id="O31820"/>
<dbReference type="OrthoDB" id="25753at2"/>
<dbReference type="PhylomeDB" id="O31820"/>
<dbReference type="BioCyc" id="BSUB:BSU18010-MONOMER"/>
<dbReference type="Proteomes" id="UP000001570">
    <property type="component" value="Chromosome"/>
</dbReference>
<dbReference type="GO" id="GO:0005886">
    <property type="term" value="C:plasma membrane"/>
    <property type="evidence" value="ECO:0007669"/>
    <property type="project" value="UniProtKB-SubCell"/>
</dbReference>
<dbReference type="GO" id="GO:0016209">
    <property type="term" value="F:antioxidant activity"/>
    <property type="evidence" value="ECO:0007669"/>
    <property type="project" value="InterPro"/>
</dbReference>
<dbReference type="GO" id="GO:0016491">
    <property type="term" value="F:oxidoreductase activity"/>
    <property type="evidence" value="ECO:0007669"/>
    <property type="project" value="InterPro"/>
</dbReference>
<dbReference type="CDD" id="cd02966">
    <property type="entry name" value="TlpA_like_family"/>
    <property type="match status" value="1"/>
</dbReference>
<dbReference type="Gene3D" id="3.40.30.10">
    <property type="entry name" value="Glutaredoxin"/>
    <property type="match status" value="1"/>
</dbReference>
<dbReference type="InterPro" id="IPR000866">
    <property type="entry name" value="AhpC/TSA"/>
</dbReference>
<dbReference type="InterPro" id="IPR036249">
    <property type="entry name" value="Thioredoxin-like_sf"/>
</dbReference>
<dbReference type="InterPro" id="IPR013766">
    <property type="entry name" value="Thioredoxin_domain"/>
</dbReference>
<dbReference type="InterPro" id="IPR050553">
    <property type="entry name" value="Thioredoxin_ResA/DsbE_sf"/>
</dbReference>
<dbReference type="PANTHER" id="PTHR42852">
    <property type="entry name" value="THIOL:DISULFIDE INTERCHANGE PROTEIN DSBE"/>
    <property type="match status" value="1"/>
</dbReference>
<dbReference type="PANTHER" id="PTHR42852:SF1">
    <property type="entry name" value="THIOREDOXIN-LIKE PROTEIN YNEN"/>
    <property type="match status" value="1"/>
</dbReference>
<dbReference type="Pfam" id="PF00578">
    <property type="entry name" value="AhpC-TSA"/>
    <property type="match status" value="1"/>
</dbReference>
<dbReference type="SUPFAM" id="SSF52833">
    <property type="entry name" value="Thioredoxin-like"/>
    <property type="match status" value="1"/>
</dbReference>
<dbReference type="PROSITE" id="PS51352">
    <property type="entry name" value="THIOREDOXIN_2"/>
    <property type="match status" value="1"/>
</dbReference>